<dbReference type="EC" id="5.6.1.7" evidence="1"/>
<dbReference type="EMBL" id="CP001097">
    <property type="protein sequence ID" value="ACD89591.1"/>
    <property type="molecule type" value="Genomic_DNA"/>
</dbReference>
<dbReference type="RefSeq" id="WP_012465472.1">
    <property type="nucleotide sequence ID" value="NC_010803.1"/>
</dbReference>
<dbReference type="SMR" id="B3EGF4"/>
<dbReference type="STRING" id="290315.Clim_0498"/>
<dbReference type="KEGG" id="cli:Clim_0498"/>
<dbReference type="eggNOG" id="COG0459">
    <property type="taxonomic scope" value="Bacteria"/>
</dbReference>
<dbReference type="HOGENOM" id="CLU_016503_3_0_10"/>
<dbReference type="OrthoDB" id="9766614at2"/>
<dbReference type="Proteomes" id="UP000008841">
    <property type="component" value="Chromosome"/>
</dbReference>
<dbReference type="GO" id="GO:0005737">
    <property type="term" value="C:cytoplasm"/>
    <property type="evidence" value="ECO:0007669"/>
    <property type="project" value="UniProtKB-SubCell"/>
</dbReference>
<dbReference type="GO" id="GO:0005524">
    <property type="term" value="F:ATP binding"/>
    <property type="evidence" value="ECO:0007669"/>
    <property type="project" value="UniProtKB-UniRule"/>
</dbReference>
<dbReference type="GO" id="GO:0140662">
    <property type="term" value="F:ATP-dependent protein folding chaperone"/>
    <property type="evidence" value="ECO:0007669"/>
    <property type="project" value="InterPro"/>
</dbReference>
<dbReference type="GO" id="GO:0016853">
    <property type="term" value="F:isomerase activity"/>
    <property type="evidence" value="ECO:0007669"/>
    <property type="project" value="UniProtKB-KW"/>
</dbReference>
<dbReference type="GO" id="GO:0051082">
    <property type="term" value="F:unfolded protein binding"/>
    <property type="evidence" value="ECO:0007669"/>
    <property type="project" value="UniProtKB-UniRule"/>
</dbReference>
<dbReference type="GO" id="GO:0042026">
    <property type="term" value="P:protein refolding"/>
    <property type="evidence" value="ECO:0007669"/>
    <property type="project" value="UniProtKB-UniRule"/>
</dbReference>
<dbReference type="CDD" id="cd03344">
    <property type="entry name" value="GroEL"/>
    <property type="match status" value="1"/>
</dbReference>
<dbReference type="FunFam" id="3.50.7.10:FF:000001">
    <property type="entry name" value="60 kDa chaperonin"/>
    <property type="match status" value="1"/>
</dbReference>
<dbReference type="Gene3D" id="3.50.7.10">
    <property type="entry name" value="GroEL"/>
    <property type="match status" value="1"/>
</dbReference>
<dbReference type="Gene3D" id="1.10.560.10">
    <property type="entry name" value="GroEL-like equatorial domain"/>
    <property type="match status" value="1"/>
</dbReference>
<dbReference type="Gene3D" id="3.30.260.10">
    <property type="entry name" value="TCP-1-like chaperonin intermediate domain"/>
    <property type="match status" value="1"/>
</dbReference>
<dbReference type="HAMAP" id="MF_00600">
    <property type="entry name" value="CH60"/>
    <property type="match status" value="1"/>
</dbReference>
<dbReference type="InterPro" id="IPR018370">
    <property type="entry name" value="Chaperonin_Cpn60_CS"/>
</dbReference>
<dbReference type="InterPro" id="IPR001844">
    <property type="entry name" value="Cpn60/GroEL"/>
</dbReference>
<dbReference type="InterPro" id="IPR002423">
    <property type="entry name" value="Cpn60/GroEL/TCP-1"/>
</dbReference>
<dbReference type="InterPro" id="IPR027409">
    <property type="entry name" value="GroEL-like_apical_dom_sf"/>
</dbReference>
<dbReference type="InterPro" id="IPR027413">
    <property type="entry name" value="GROEL-like_equatorial_sf"/>
</dbReference>
<dbReference type="InterPro" id="IPR027410">
    <property type="entry name" value="TCP-1-like_intermed_sf"/>
</dbReference>
<dbReference type="NCBIfam" id="TIGR02348">
    <property type="entry name" value="GroEL"/>
    <property type="match status" value="1"/>
</dbReference>
<dbReference type="NCBIfam" id="NF000592">
    <property type="entry name" value="PRK00013.1"/>
    <property type="match status" value="1"/>
</dbReference>
<dbReference type="NCBIfam" id="NF009487">
    <property type="entry name" value="PRK12849.1"/>
    <property type="match status" value="1"/>
</dbReference>
<dbReference type="NCBIfam" id="NF009488">
    <property type="entry name" value="PRK12850.1"/>
    <property type="match status" value="1"/>
</dbReference>
<dbReference type="NCBIfam" id="NF009489">
    <property type="entry name" value="PRK12851.1"/>
    <property type="match status" value="1"/>
</dbReference>
<dbReference type="PANTHER" id="PTHR45633">
    <property type="entry name" value="60 KDA HEAT SHOCK PROTEIN, MITOCHONDRIAL"/>
    <property type="match status" value="1"/>
</dbReference>
<dbReference type="Pfam" id="PF00118">
    <property type="entry name" value="Cpn60_TCP1"/>
    <property type="match status" value="1"/>
</dbReference>
<dbReference type="PRINTS" id="PR00298">
    <property type="entry name" value="CHAPERONIN60"/>
</dbReference>
<dbReference type="SUPFAM" id="SSF52029">
    <property type="entry name" value="GroEL apical domain-like"/>
    <property type="match status" value="1"/>
</dbReference>
<dbReference type="SUPFAM" id="SSF48592">
    <property type="entry name" value="GroEL equatorial domain-like"/>
    <property type="match status" value="1"/>
</dbReference>
<dbReference type="SUPFAM" id="SSF54849">
    <property type="entry name" value="GroEL-intermediate domain like"/>
    <property type="match status" value="1"/>
</dbReference>
<dbReference type="PROSITE" id="PS00296">
    <property type="entry name" value="CHAPERONINS_CPN60"/>
    <property type="match status" value="1"/>
</dbReference>
<comment type="function">
    <text evidence="1">Together with its co-chaperonin GroES, plays an essential role in assisting protein folding. The GroEL-GroES system forms a nano-cage that allows encapsulation of the non-native substrate proteins and provides a physical environment optimized to promote and accelerate protein folding.</text>
</comment>
<comment type="catalytic activity">
    <reaction evidence="1">
        <text>ATP + H2O + a folded polypeptide = ADP + phosphate + an unfolded polypeptide.</text>
        <dbReference type="EC" id="5.6.1.7"/>
    </reaction>
</comment>
<comment type="subunit">
    <text evidence="1">Forms a cylinder of 14 subunits composed of two heptameric rings stacked back-to-back. Interacts with the co-chaperonin GroES.</text>
</comment>
<comment type="subcellular location">
    <subcellularLocation>
        <location evidence="1">Cytoplasm</location>
    </subcellularLocation>
</comment>
<comment type="similarity">
    <text evidence="1">Belongs to the chaperonin (HSP60) family.</text>
</comment>
<accession>B3EGF4</accession>
<gene>
    <name evidence="1" type="primary">groEL</name>
    <name evidence="1" type="synonym">groL</name>
    <name type="ordered locus">Clim_0498</name>
</gene>
<evidence type="ECO:0000255" key="1">
    <source>
        <dbReference type="HAMAP-Rule" id="MF_00600"/>
    </source>
</evidence>
<reference key="1">
    <citation type="submission" date="2008-05" db="EMBL/GenBank/DDBJ databases">
        <title>Complete sequence of Chlorobium limicola DSM 245.</title>
        <authorList>
            <consortium name="US DOE Joint Genome Institute"/>
            <person name="Lucas S."/>
            <person name="Copeland A."/>
            <person name="Lapidus A."/>
            <person name="Glavina del Rio T."/>
            <person name="Dalin E."/>
            <person name="Tice H."/>
            <person name="Bruce D."/>
            <person name="Goodwin L."/>
            <person name="Pitluck S."/>
            <person name="Schmutz J."/>
            <person name="Larimer F."/>
            <person name="Land M."/>
            <person name="Hauser L."/>
            <person name="Kyrpides N."/>
            <person name="Ovchinnikova G."/>
            <person name="Zhao F."/>
            <person name="Li T."/>
            <person name="Liu Z."/>
            <person name="Overmann J."/>
            <person name="Bryant D.A."/>
            <person name="Richardson P."/>
        </authorList>
    </citation>
    <scope>NUCLEOTIDE SEQUENCE [LARGE SCALE GENOMIC DNA]</scope>
    <source>
        <strain>DSM 245 / NBRC 103803 / 6330</strain>
    </source>
</reference>
<feature type="chain" id="PRO_1000129986" description="Chaperonin GroEL">
    <location>
        <begin position="1"/>
        <end position="547"/>
    </location>
</feature>
<feature type="binding site" evidence="1">
    <location>
        <begin position="30"/>
        <end position="33"/>
    </location>
    <ligand>
        <name>ATP</name>
        <dbReference type="ChEBI" id="CHEBI:30616"/>
    </ligand>
</feature>
<feature type="binding site" evidence="1">
    <location>
        <position position="51"/>
    </location>
    <ligand>
        <name>ATP</name>
        <dbReference type="ChEBI" id="CHEBI:30616"/>
    </ligand>
</feature>
<feature type="binding site" evidence="1">
    <location>
        <begin position="87"/>
        <end position="91"/>
    </location>
    <ligand>
        <name>ATP</name>
        <dbReference type="ChEBI" id="CHEBI:30616"/>
    </ligand>
</feature>
<feature type="binding site" evidence="1">
    <location>
        <position position="415"/>
    </location>
    <ligand>
        <name>ATP</name>
        <dbReference type="ChEBI" id="CHEBI:30616"/>
    </ligand>
</feature>
<feature type="binding site" evidence="1">
    <location>
        <position position="496"/>
    </location>
    <ligand>
        <name>ATP</name>
        <dbReference type="ChEBI" id="CHEBI:30616"/>
    </ligand>
</feature>
<keyword id="KW-0067">ATP-binding</keyword>
<keyword id="KW-0143">Chaperone</keyword>
<keyword id="KW-0963">Cytoplasm</keyword>
<keyword id="KW-0413">Isomerase</keyword>
<keyword id="KW-0547">Nucleotide-binding</keyword>
<protein>
    <recommendedName>
        <fullName evidence="1">Chaperonin GroEL</fullName>
        <ecNumber evidence="1">5.6.1.7</ecNumber>
    </recommendedName>
    <alternativeName>
        <fullName evidence="1">60 kDa chaperonin</fullName>
    </alternativeName>
    <alternativeName>
        <fullName evidence="1">Chaperonin-60</fullName>
        <shortName evidence="1">Cpn60</shortName>
    </alternativeName>
</protein>
<sequence length="547" mass="58092">MTAKDIIFDSDARAKLKVGVDKLANAVKVTLGPAGRNVLIDKKFGAPTSTKDGVTVAKEIELADAVENMGAQMVREVASKTSDVAGDGTTTATVLAQAIYREGLKNVAAGARPIDLKRGIDRAVKEVVAELRNISRSISGKKEIAQVGTISANNDPEIGELIAEAMDKVGKDGVITVEEAKGMDTELKVVEGMQFDRGYLSPYFVTNPETMEAEIEDPLILIHDKKIGNMKELLPILEKSAQSGRPLLIIAEDIEGEALATLVVNKLRGTLKVCAVKAPGFGDRRKAMLEDIAILTGGTVISEEKGYKLENATLAYLGQAGRVNIDKDNTTIVEGKGTQEDIKARINEIKGQIDKSTSDYDTEKLQERLAKLSGGVAVLNIGASTEVEMKEKKARVEDALHATRAAVQEGIVVGGGVALIRAIKGLANAVADNEDQKTGIEIIRRALEEPLRQIVANTGTTDGAVVLEKVKAAEGDFGFNARTEQYENLVEAGVVDPTKVTRSALENAASVASILLTTEAAITDIKEEKSDMPAMPPGGMGGMGGMY</sequence>
<organism>
    <name type="scientific">Chlorobium limicola (strain DSM 245 / NBRC 103803 / 6330)</name>
    <dbReference type="NCBI Taxonomy" id="290315"/>
    <lineage>
        <taxon>Bacteria</taxon>
        <taxon>Pseudomonadati</taxon>
        <taxon>Chlorobiota</taxon>
        <taxon>Chlorobiia</taxon>
        <taxon>Chlorobiales</taxon>
        <taxon>Chlorobiaceae</taxon>
        <taxon>Chlorobium/Pelodictyon group</taxon>
        <taxon>Chlorobium</taxon>
    </lineage>
</organism>
<name>CH60_CHLL2</name>
<proteinExistence type="inferred from homology"/>